<dbReference type="EC" id="4.2.1.59" evidence="1"/>
<dbReference type="EC" id="5.3.3.14" evidence="1"/>
<dbReference type="EMBL" id="BX248583">
    <property type="protein sequence ID" value="CAD83482.1"/>
    <property type="molecule type" value="Genomic_DNA"/>
</dbReference>
<dbReference type="SMR" id="Q7U352"/>
<dbReference type="STRING" id="203907.Bfl420"/>
<dbReference type="KEGG" id="bfl:Bfl420"/>
<dbReference type="eggNOG" id="COG0764">
    <property type="taxonomic scope" value="Bacteria"/>
</dbReference>
<dbReference type="HOGENOM" id="CLU_097925_0_0_6"/>
<dbReference type="OrthoDB" id="9786735at2"/>
<dbReference type="UniPathway" id="UPA00094"/>
<dbReference type="Proteomes" id="UP000002192">
    <property type="component" value="Chromosome"/>
</dbReference>
<dbReference type="GO" id="GO:0005737">
    <property type="term" value="C:cytoplasm"/>
    <property type="evidence" value="ECO:0007669"/>
    <property type="project" value="UniProtKB-SubCell"/>
</dbReference>
<dbReference type="GO" id="GO:0019171">
    <property type="term" value="F:(3R)-hydroxyacyl-[acyl-carrier-protein] dehydratase activity"/>
    <property type="evidence" value="ECO:0007669"/>
    <property type="project" value="UniProtKB-UniRule"/>
</dbReference>
<dbReference type="GO" id="GO:0034017">
    <property type="term" value="F:trans-2-decenoyl-acyl-carrier-protein isomerase activity"/>
    <property type="evidence" value="ECO:0007669"/>
    <property type="project" value="UniProtKB-UniRule"/>
</dbReference>
<dbReference type="GO" id="GO:0006636">
    <property type="term" value="P:unsaturated fatty acid biosynthetic process"/>
    <property type="evidence" value="ECO:0007669"/>
    <property type="project" value="UniProtKB-UniRule"/>
</dbReference>
<dbReference type="Gene3D" id="3.10.129.10">
    <property type="entry name" value="Hotdog Thioesterase"/>
    <property type="match status" value="1"/>
</dbReference>
<dbReference type="HAMAP" id="MF_00405">
    <property type="entry name" value="FabA"/>
    <property type="match status" value="1"/>
</dbReference>
<dbReference type="InterPro" id="IPR010083">
    <property type="entry name" value="FabA"/>
</dbReference>
<dbReference type="InterPro" id="IPR013114">
    <property type="entry name" value="FabA_FabZ"/>
</dbReference>
<dbReference type="InterPro" id="IPR029069">
    <property type="entry name" value="HotDog_dom_sf"/>
</dbReference>
<dbReference type="NCBIfam" id="TIGR01749">
    <property type="entry name" value="fabA"/>
    <property type="match status" value="1"/>
</dbReference>
<dbReference type="NCBIfam" id="NF003509">
    <property type="entry name" value="PRK05174.1"/>
    <property type="match status" value="1"/>
</dbReference>
<dbReference type="PANTHER" id="PTHR30272">
    <property type="entry name" value="3-HYDROXYACYL-[ACYL-CARRIER-PROTEIN] DEHYDRATASE"/>
    <property type="match status" value="1"/>
</dbReference>
<dbReference type="PANTHER" id="PTHR30272:SF8">
    <property type="entry name" value="3-HYDROXYDECANOYL-[ACYL-CARRIER-PROTEIN] DEHYDRATASE"/>
    <property type="match status" value="1"/>
</dbReference>
<dbReference type="Pfam" id="PF07977">
    <property type="entry name" value="FabA"/>
    <property type="match status" value="1"/>
</dbReference>
<dbReference type="SUPFAM" id="SSF54637">
    <property type="entry name" value="Thioesterase/thiol ester dehydrase-isomerase"/>
    <property type="match status" value="1"/>
</dbReference>
<proteinExistence type="inferred from homology"/>
<sequence length="172" mass="19239">MFNKQEFYTKEDLLNSSKGNLFGKKGPVLPAPNMLMIDRITKMTTNGGNYNKGFVSAELDIRSDMWFFSCHFINDPVMPGCLGLDAMWQLVGFYLGWIGGKGRGRALGVKEVKFTGQILPTAKTVTYLIHFRKIITRTLIMGMADGEVMCDNKIIYTAADLKVGLFTNISTF</sequence>
<accession>Q7U352</accession>
<keyword id="KW-0963">Cytoplasm</keyword>
<keyword id="KW-0275">Fatty acid biosynthesis</keyword>
<keyword id="KW-0276">Fatty acid metabolism</keyword>
<keyword id="KW-0413">Isomerase</keyword>
<keyword id="KW-0444">Lipid biosynthesis</keyword>
<keyword id="KW-0443">Lipid metabolism</keyword>
<keyword id="KW-0456">Lyase</keyword>
<keyword id="KW-1185">Reference proteome</keyword>
<reference key="1">
    <citation type="journal article" date="2003" name="Proc. Natl. Acad. Sci. U.S.A.">
        <title>The genome sequence of Blochmannia floridanus: comparative analysis of reduced genomes.</title>
        <authorList>
            <person name="Gil R."/>
            <person name="Silva F.J."/>
            <person name="Zientz E."/>
            <person name="Delmotte F."/>
            <person name="Gonzalez-Candelas F."/>
            <person name="Latorre A."/>
            <person name="Rausell C."/>
            <person name="Kamerbeek J."/>
            <person name="Gadau J."/>
            <person name="Hoelldobler B."/>
            <person name="van Ham R.C.H.J."/>
            <person name="Gross R."/>
            <person name="Moya A."/>
        </authorList>
    </citation>
    <scope>NUCLEOTIDE SEQUENCE [LARGE SCALE GENOMIC DNA]</scope>
</reference>
<evidence type="ECO:0000255" key="1">
    <source>
        <dbReference type="HAMAP-Rule" id="MF_00405"/>
    </source>
</evidence>
<organism>
    <name type="scientific">Blochmanniella floridana</name>
    <dbReference type="NCBI Taxonomy" id="203907"/>
    <lineage>
        <taxon>Bacteria</taxon>
        <taxon>Pseudomonadati</taxon>
        <taxon>Pseudomonadota</taxon>
        <taxon>Gammaproteobacteria</taxon>
        <taxon>Enterobacterales</taxon>
        <taxon>Enterobacteriaceae</taxon>
        <taxon>ant endosymbionts</taxon>
        <taxon>Candidatus Blochmanniella</taxon>
    </lineage>
</organism>
<name>FABA_BLOFL</name>
<feature type="chain" id="PRO_0000091592" description="3-hydroxydecanoyl-[acyl-carrier-protein] dehydratase">
    <location>
        <begin position="1"/>
        <end position="172"/>
    </location>
</feature>
<feature type="active site" evidence="1">
    <location>
        <position position="71"/>
    </location>
</feature>
<comment type="function">
    <text evidence="1">Necessary for the introduction of cis unsaturation into fatty acids. Catalyzes the dehydration of (3R)-3-hydroxydecanoyl-ACP to E-(2)-decenoyl-ACP and then its isomerization to Z-(3)-decenoyl-ACP. Can catalyze the dehydratase reaction for beta-hydroxyacyl-ACPs with saturated chain lengths up to 16:0, being most active on intermediate chain length.</text>
</comment>
<comment type="catalytic activity">
    <reaction evidence="1">
        <text>a (3R)-hydroxyacyl-[ACP] = a (2E)-enoyl-[ACP] + H2O</text>
        <dbReference type="Rhea" id="RHEA:13097"/>
        <dbReference type="Rhea" id="RHEA-COMP:9925"/>
        <dbReference type="Rhea" id="RHEA-COMP:9945"/>
        <dbReference type="ChEBI" id="CHEBI:15377"/>
        <dbReference type="ChEBI" id="CHEBI:78784"/>
        <dbReference type="ChEBI" id="CHEBI:78827"/>
        <dbReference type="EC" id="4.2.1.59"/>
    </reaction>
</comment>
<comment type="catalytic activity">
    <reaction evidence="1">
        <text>(3R)-hydroxydecanoyl-[ACP] = (2E)-decenoyl-[ACP] + H2O</text>
        <dbReference type="Rhea" id="RHEA:41860"/>
        <dbReference type="Rhea" id="RHEA-COMP:9638"/>
        <dbReference type="Rhea" id="RHEA-COMP:9639"/>
        <dbReference type="ChEBI" id="CHEBI:15377"/>
        <dbReference type="ChEBI" id="CHEBI:78466"/>
        <dbReference type="ChEBI" id="CHEBI:78467"/>
    </reaction>
</comment>
<comment type="catalytic activity">
    <reaction evidence="1">
        <text>(2E)-decenoyl-[ACP] = (3Z)-decenoyl-[ACP]</text>
        <dbReference type="Rhea" id="RHEA:23568"/>
        <dbReference type="Rhea" id="RHEA-COMP:9639"/>
        <dbReference type="Rhea" id="RHEA-COMP:9927"/>
        <dbReference type="ChEBI" id="CHEBI:78467"/>
        <dbReference type="ChEBI" id="CHEBI:78798"/>
        <dbReference type="EC" id="5.3.3.14"/>
    </reaction>
</comment>
<comment type="pathway">
    <text evidence="1">Lipid metabolism; fatty acid biosynthesis.</text>
</comment>
<comment type="subunit">
    <text evidence="1">Homodimer.</text>
</comment>
<comment type="subcellular location">
    <subcellularLocation>
        <location evidence="1">Cytoplasm</location>
    </subcellularLocation>
</comment>
<comment type="similarity">
    <text evidence="1">Belongs to the thioester dehydratase family. FabA subfamily.</text>
</comment>
<gene>
    <name evidence="1" type="primary">fabA</name>
    <name type="ordered locus">Bfl420</name>
</gene>
<protein>
    <recommendedName>
        <fullName evidence="1">3-hydroxydecanoyl-[acyl-carrier-protein] dehydratase</fullName>
        <ecNumber evidence="1">4.2.1.59</ecNumber>
    </recommendedName>
    <alternativeName>
        <fullName evidence="1">3-hydroxyacyl-[acyl-carrier-protein] dehydratase FabA</fullName>
    </alternativeName>
    <alternativeName>
        <fullName evidence="1">Beta-hydroxydecanoyl thioester dehydrase</fullName>
    </alternativeName>
    <alternativeName>
        <fullName evidence="1">Trans-2-decenoyl-[acyl-carrier-protein] isomerase</fullName>
        <ecNumber evidence="1">5.3.3.14</ecNumber>
    </alternativeName>
</protein>